<accession>Q5JJF1</accession>
<organism>
    <name type="scientific">Thermococcus kodakarensis (strain ATCC BAA-918 / JCM 12380 / KOD1)</name>
    <name type="common">Pyrococcus kodakaraensis (strain KOD1)</name>
    <dbReference type="NCBI Taxonomy" id="69014"/>
    <lineage>
        <taxon>Archaea</taxon>
        <taxon>Methanobacteriati</taxon>
        <taxon>Methanobacteriota</taxon>
        <taxon>Thermococci</taxon>
        <taxon>Thermococcales</taxon>
        <taxon>Thermococcaceae</taxon>
        <taxon>Thermococcus</taxon>
    </lineage>
</organism>
<evidence type="ECO:0000255" key="1">
    <source>
        <dbReference type="HAMAP-Rule" id="MF_01315"/>
    </source>
</evidence>
<evidence type="ECO:0000269" key="2">
    <source>
    </source>
</evidence>
<evidence type="ECO:0000305" key="3"/>
<evidence type="ECO:0007744" key="4">
    <source>
        <dbReference type="PDB" id="6SKF"/>
    </source>
</evidence>
<evidence type="ECO:0007744" key="5">
    <source>
        <dbReference type="PDB" id="6SKG"/>
    </source>
</evidence>
<evidence type="ECO:0007744" key="6">
    <source>
        <dbReference type="PDB" id="6TH6"/>
    </source>
</evidence>
<feature type="chain" id="PRO_0000132189" description="Small ribosomal subunit protein uS13">
    <location>
        <begin position="1"/>
        <end position="149"/>
    </location>
</feature>
<comment type="function">
    <text evidence="1">Located at the top of the head of the 30S subunit, it contacts several helices of the 16S rRNA. In the 70S ribosome it contacts the 23S rRNA (bridge B1a) and protein L5 of the 50S subunit (bridge B1b), connecting the 2 subunits; these bridges are implicated in subunit movement.</text>
</comment>
<comment type="subunit">
    <text evidence="1 2">Part of the 30S ribosomal subunit (PubMed:32555463). Forms a loose heterodimer with protein S19. Forms two bridges to the 50S subunit in the 70S ribosome.</text>
</comment>
<comment type="similarity">
    <text evidence="1">Belongs to the universal ribosomal protein uS13 family.</text>
</comment>
<sequence>MTENFRHIVRVAGVDIDGHKQVRWALTGIKGIGINFATMVLRVAGIDPFMKAGYLTDEQVKKIEEILADPVAHGIPAWAVNRPKDYETGKDMHLITAKLVMAWREDVNRLRRIRAYRGIRHELGLPVRGQRTRSNFRHGTTVGVSRRKK</sequence>
<reference key="1">
    <citation type="journal article" date="2005" name="Genome Res.">
        <title>Complete genome sequence of the hyperthermophilic archaeon Thermococcus kodakaraensis KOD1 and comparison with Pyrococcus genomes.</title>
        <authorList>
            <person name="Fukui T."/>
            <person name="Atomi H."/>
            <person name="Kanai T."/>
            <person name="Matsumi R."/>
            <person name="Fujiwara S."/>
            <person name="Imanaka T."/>
        </authorList>
    </citation>
    <scope>NUCLEOTIDE SEQUENCE [LARGE SCALE GENOMIC DNA]</scope>
    <source>
        <strain>ATCC BAA-918 / JCM 12380 / KOD1</strain>
    </source>
</reference>
<reference evidence="4 5 6" key="2">
    <citation type="journal article" date="2020" name="Nature">
        <title>Dynamic RNA acetylation revealed by quantitative cross-evolutionary mapping.</title>
        <authorList>
            <person name="Sas-Chen A."/>
            <person name="Thomas J.M."/>
            <person name="Matzov D."/>
            <person name="Taoka M."/>
            <person name="Nance K.D."/>
            <person name="Nir R."/>
            <person name="Bryson K.M."/>
            <person name="Shachar R."/>
            <person name="Liman G.L.S."/>
            <person name="Burkhart B.W."/>
            <person name="Gamage S.T."/>
            <person name="Nobe Y."/>
            <person name="Briney C.A."/>
            <person name="Levy M.J."/>
            <person name="Fuchs R.T."/>
            <person name="Robb G.B."/>
            <person name="Hartmann J."/>
            <person name="Sharma S."/>
            <person name="Lin Q."/>
            <person name="Florens L."/>
            <person name="Washburn M.P."/>
            <person name="Isobe T."/>
            <person name="Santangelo T.J."/>
            <person name="Shalev-Benami M."/>
            <person name="Meier J.L."/>
            <person name="Schwartz S."/>
        </authorList>
    </citation>
    <scope>STRUCTURE BY ELECTRON MICROSCOPY (2.55 ANGSTROMS) IN 70S RIBOSOME</scope>
    <scope>SUBUNIT</scope>
    <source>
        <strain>ATCC BAA-918 / TS559</strain>
    </source>
</reference>
<gene>
    <name evidence="1" type="primary">rps13</name>
    <name type="ordered locus">TK1506</name>
</gene>
<name>RS13_THEKO</name>
<proteinExistence type="evidence at protein level"/>
<protein>
    <recommendedName>
        <fullName evidence="1">Small ribosomal subunit protein uS13</fullName>
    </recommendedName>
    <alternativeName>
        <fullName evidence="3">30S ribosomal protein S13</fullName>
    </alternativeName>
</protein>
<keyword id="KW-0002">3D-structure</keyword>
<keyword id="KW-1185">Reference proteome</keyword>
<keyword id="KW-0687">Ribonucleoprotein</keyword>
<keyword id="KW-0689">Ribosomal protein</keyword>
<keyword id="KW-0694">RNA-binding</keyword>
<keyword id="KW-0699">rRNA-binding</keyword>
<dbReference type="EMBL" id="AP006878">
    <property type="protein sequence ID" value="BAD85695.1"/>
    <property type="molecule type" value="Genomic_DNA"/>
</dbReference>
<dbReference type="RefSeq" id="WP_011250457.1">
    <property type="nucleotide sequence ID" value="NC_006624.1"/>
</dbReference>
<dbReference type="PDB" id="6SKF">
    <property type="method" value="EM"/>
    <property type="resolution" value="2.95 A"/>
    <property type="chains" value="Ap=1-149"/>
</dbReference>
<dbReference type="PDB" id="6SKG">
    <property type="method" value="EM"/>
    <property type="resolution" value="2.65 A"/>
    <property type="chains" value="Ap=1-149"/>
</dbReference>
<dbReference type="PDB" id="6TH6">
    <property type="method" value="EM"/>
    <property type="resolution" value="2.55 A"/>
    <property type="chains" value="Ap=1-149"/>
</dbReference>
<dbReference type="PDBsum" id="6SKF"/>
<dbReference type="PDBsum" id="6SKG"/>
<dbReference type="PDBsum" id="6TH6"/>
<dbReference type="EMDB" id="EMD-10223"/>
<dbReference type="EMDB" id="EMD-10224"/>
<dbReference type="EMDB" id="EMD-10503"/>
<dbReference type="SMR" id="Q5JJF1"/>
<dbReference type="FunCoup" id="Q5JJF1">
    <property type="interactions" value="173"/>
</dbReference>
<dbReference type="STRING" id="69014.TK1506"/>
<dbReference type="EnsemblBacteria" id="BAD85695">
    <property type="protein sequence ID" value="BAD85695"/>
    <property type="gene ID" value="TK1506"/>
</dbReference>
<dbReference type="GeneID" id="78448033"/>
<dbReference type="KEGG" id="tko:TK1506"/>
<dbReference type="PATRIC" id="fig|69014.16.peg.1466"/>
<dbReference type="eggNOG" id="arCOG01722">
    <property type="taxonomic scope" value="Archaea"/>
</dbReference>
<dbReference type="HOGENOM" id="CLU_103849_0_0_2"/>
<dbReference type="InParanoid" id="Q5JJF1"/>
<dbReference type="OrthoDB" id="372127at2157"/>
<dbReference type="PhylomeDB" id="Q5JJF1"/>
<dbReference type="Proteomes" id="UP000000536">
    <property type="component" value="Chromosome"/>
</dbReference>
<dbReference type="GO" id="GO:0005829">
    <property type="term" value="C:cytosol"/>
    <property type="evidence" value="ECO:0000318"/>
    <property type="project" value="GO_Central"/>
</dbReference>
<dbReference type="GO" id="GO:0015935">
    <property type="term" value="C:small ribosomal subunit"/>
    <property type="evidence" value="ECO:0000318"/>
    <property type="project" value="GO_Central"/>
</dbReference>
<dbReference type="GO" id="GO:0019843">
    <property type="term" value="F:rRNA binding"/>
    <property type="evidence" value="ECO:0007669"/>
    <property type="project" value="UniProtKB-UniRule"/>
</dbReference>
<dbReference type="GO" id="GO:0003735">
    <property type="term" value="F:structural constituent of ribosome"/>
    <property type="evidence" value="ECO:0007669"/>
    <property type="project" value="InterPro"/>
</dbReference>
<dbReference type="GO" id="GO:0006412">
    <property type="term" value="P:translation"/>
    <property type="evidence" value="ECO:0007669"/>
    <property type="project" value="UniProtKB-UniRule"/>
</dbReference>
<dbReference type="FunFam" id="1.10.8.50:FF:000001">
    <property type="entry name" value="30S ribosomal protein S13"/>
    <property type="match status" value="1"/>
</dbReference>
<dbReference type="FunFam" id="4.10.910.10:FF:000002">
    <property type="entry name" value="40S ribosomal protein S18"/>
    <property type="match status" value="1"/>
</dbReference>
<dbReference type="Gene3D" id="1.10.8.50">
    <property type="match status" value="1"/>
</dbReference>
<dbReference type="Gene3D" id="4.10.910.10">
    <property type="entry name" value="30s ribosomal protein s13, domain 2"/>
    <property type="match status" value="1"/>
</dbReference>
<dbReference type="HAMAP" id="MF_01315">
    <property type="entry name" value="Ribosomal_uS13"/>
    <property type="match status" value="1"/>
</dbReference>
<dbReference type="InterPro" id="IPR027437">
    <property type="entry name" value="Rbsml_uS13_C"/>
</dbReference>
<dbReference type="InterPro" id="IPR001892">
    <property type="entry name" value="Ribosomal_uS13"/>
</dbReference>
<dbReference type="InterPro" id="IPR010979">
    <property type="entry name" value="Ribosomal_uS13-like_H2TH"/>
</dbReference>
<dbReference type="InterPro" id="IPR019977">
    <property type="entry name" value="Ribosomal_uS13_archaeal"/>
</dbReference>
<dbReference type="InterPro" id="IPR018269">
    <property type="entry name" value="Ribosomal_uS13_CS"/>
</dbReference>
<dbReference type="NCBIfam" id="NF003140">
    <property type="entry name" value="PRK04053.1"/>
    <property type="match status" value="1"/>
</dbReference>
<dbReference type="NCBIfam" id="TIGR03629">
    <property type="entry name" value="uS13_arch"/>
    <property type="match status" value="1"/>
</dbReference>
<dbReference type="PANTHER" id="PTHR10871">
    <property type="entry name" value="30S RIBOSOMAL PROTEIN S13/40S RIBOSOMAL PROTEIN S18"/>
    <property type="match status" value="1"/>
</dbReference>
<dbReference type="PANTHER" id="PTHR10871:SF3">
    <property type="entry name" value="SMALL RIBOSOMAL SUBUNIT PROTEIN US13"/>
    <property type="match status" value="1"/>
</dbReference>
<dbReference type="Pfam" id="PF00416">
    <property type="entry name" value="Ribosomal_S13"/>
    <property type="match status" value="1"/>
</dbReference>
<dbReference type="PIRSF" id="PIRSF002134">
    <property type="entry name" value="Ribosomal_S13"/>
    <property type="match status" value="1"/>
</dbReference>
<dbReference type="SUPFAM" id="SSF46946">
    <property type="entry name" value="S13-like H2TH domain"/>
    <property type="match status" value="1"/>
</dbReference>
<dbReference type="PROSITE" id="PS00646">
    <property type="entry name" value="RIBOSOMAL_S13_1"/>
    <property type="match status" value="1"/>
</dbReference>
<dbReference type="PROSITE" id="PS50159">
    <property type="entry name" value="RIBOSOMAL_S13_2"/>
    <property type="match status" value="1"/>
</dbReference>